<keyword id="KW-0963">Cytoplasm</keyword>
<keyword id="KW-0251">Elongation factor</keyword>
<keyword id="KW-0648">Protein biosynthesis</keyword>
<dbReference type="EMBL" id="CP001029">
    <property type="protein sequence ID" value="ACB81346.1"/>
    <property type="molecule type" value="Genomic_DNA"/>
</dbReference>
<dbReference type="RefSeq" id="WP_012455063.1">
    <property type="nucleotide sequence ID" value="NC_010725.1"/>
</dbReference>
<dbReference type="SMR" id="B1ZHM8"/>
<dbReference type="STRING" id="441620.Mpop_3194"/>
<dbReference type="KEGG" id="mpo:Mpop_3194"/>
<dbReference type="eggNOG" id="COG0231">
    <property type="taxonomic scope" value="Bacteria"/>
</dbReference>
<dbReference type="HOGENOM" id="CLU_074944_1_1_5"/>
<dbReference type="OrthoDB" id="9801844at2"/>
<dbReference type="UniPathway" id="UPA00345"/>
<dbReference type="Proteomes" id="UP000007136">
    <property type="component" value="Chromosome"/>
</dbReference>
<dbReference type="GO" id="GO:0005737">
    <property type="term" value="C:cytoplasm"/>
    <property type="evidence" value="ECO:0007669"/>
    <property type="project" value="UniProtKB-SubCell"/>
</dbReference>
<dbReference type="GO" id="GO:0003746">
    <property type="term" value="F:translation elongation factor activity"/>
    <property type="evidence" value="ECO:0007669"/>
    <property type="project" value="UniProtKB-UniRule"/>
</dbReference>
<dbReference type="GO" id="GO:0043043">
    <property type="term" value="P:peptide biosynthetic process"/>
    <property type="evidence" value="ECO:0007669"/>
    <property type="project" value="InterPro"/>
</dbReference>
<dbReference type="CDD" id="cd04470">
    <property type="entry name" value="S1_EF-P_repeat_1"/>
    <property type="match status" value="1"/>
</dbReference>
<dbReference type="CDD" id="cd05794">
    <property type="entry name" value="S1_EF-P_repeat_2"/>
    <property type="match status" value="1"/>
</dbReference>
<dbReference type="FunFam" id="2.40.50.140:FF:000004">
    <property type="entry name" value="Elongation factor P"/>
    <property type="match status" value="1"/>
</dbReference>
<dbReference type="FunFam" id="2.40.50.140:FF:000009">
    <property type="entry name" value="Elongation factor P"/>
    <property type="match status" value="1"/>
</dbReference>
<dbReference type="Gene3D" id="2.30.30.30">
    <property type="match status" value="1"/>
</dbReference>
<dbReference type="Gene3D" id="2.40.50.140">
    <property type="entry name" value="Nucleic acid-binding proteins"/>
    <property type="match status" value="2"/>
</dbReference>
<dbReference type="HAMAP" id="MF_00141">
    <property type="entry name" value="EF_P"/>
    <property type="match status" value="1"/>
</dbReference>
<dbReference type="InterPro" id="IPR015365">
    <property type="entry name" value="Elong-fact-P_C"/>
</dbReference>
<dbReference type="InterPro" id="IPR012340">
    <property type="entry name" value="NA-bd_OB-fold"/>
</dbReference>
<dbReference type="InterPro" id="IPR014722">
    <property type="entry name" value="Rib_uL2_dom2"/>
</dbReference>
<dbReference type="InterPro" id="IPR020599">
    <property type="entry name" value="Transl_elong_fac_P/YeiP"/>
</dbReference>
<dbReference type="InterPro" id="IPR013185">
    <property type="entry name" value="Transl_elong_KOW-like"/>
</dbReference>
<dbReference type="InterPro" id="IPR001059">
    <property type="entry name" value="Transl_elong_P/YeiP_cen"/>
</dbReference>
<dbReference type="InterPro" id="IPR013852">
    <property type="entry name" value="Transl_elong_P/YeiP_CS"/>
</dbReference>
<dbReference type="InterPro" id="IPR011768">
    <property type="entry name" value="Transl_elongation_fac_P"/>
</dbReference>
<dbReference type="InterPro" id="IPR008991">
    <property type="entry name" value="Translation_prot_SH3-like_sf"/>
</dbReference>
<dbReference type="NCBIfam" id="TIGR00038">
    <property type="entry name" value="efp"/>
    <property type="match status" value="1"/>
</dbReference>
<dbReference type="NCBIfam" id="NF001810">
    <property type="entry name" value="PRK00529.1"/>
    <property type="match status" value="1"/>
</dbReference>
<dbReference type="PANTHER" id="PTHR30053">
    <property type="entry name" value="ELONGATION FACTOR P"/>
    <property type="match status" value="1"/>
</dbReference>
<dbReference type="PANTHER" id="PTHR30053:SF14">
    <property type="entry name" value="TRANSLATION ELONGATION FACTOR KOW-LIKE DOMAIN-CONTAINING PROTEIN"/>
    <property type="match status" value="1"/>
</dbReference>
<dbReference type="Pfam" id="PF01132">
    <property type="entry name" value="EFP"/>
    <property type="match status" value="1"/>
</dbReference>
<dbReference type="Pfam" id="PF08207">
    <property type="entry name" value="EFP_N"/>
    <property type="match status" value="1"/>
</dbReference>
<dbReference type="Pfam" id="PF09285">
    <property type="entry name" value="Elong-fact-P_C"/>
    <property type="match status" value="1"/>
</dbReference>
<dbReference type="PIRSF" id="PIRSF005901">
    <property type="entry name" value="EF-P"/>
    <property type="match status" value="1"/>
</dbReference>
<dbReference type="SMART" id="SM01185">
    <property type="entry name" value="EFP"/>
    <property type="match status" value="1"/>
</dbReference>
<dbReference type="SMART" id="SM00841">
    <property type="entry name" value="Elong-fact-P_C"/>
    <property type="match status" value="1"/>
</dbReference>
<dbReference type="SUPFAM" id="SSF50249">
    <property type="entry name" value="Nucleic acid-binding proteins"/>
    <property type="match status" value="2"/>
</dbReference>
<dbReference type="SUPFAM" id="SSF50104">
    <property type="entry name" value="Translation proteins SH3-like domain"/>
    <property type="match status" value="1"/>
</dbReference>
<dbReference type="PROSITE" id="PS01275">
    <property type="entry name" value="EFP"/>
    <property type="match status" value="1"/>
</dbReference>
<proteinExistence type="inferred from homology"/>
<organism>
    <name type="scientific">Methylorubrum populi (strain ATCC BAA-705 / NCIMB 13946 / BJ001)</name>
    <name type="common">Methylobacterium populi</name>
    <dbReference type="NCBI Taxonomy" id="441620"/>
    <lineage>
        <taxon>Bacteria</taxon>
        <taxon>Pseudomonadati</taxon>
        <taxon>Pseudomonadota</taxon>
        <taxon>Alphaproteobacteria</taxon>
        <taxon>Hyphomicrobiales</taxon>
        <taxon>Methylobacteriaceae</taxon>
        <taxon>Methylorubrum</taxon>
    </lineage>
</organism>
<evidence type="ECO:0000255" key="1">
    <source>
        <dbReference type="HAMAP-Rule" id="MF_00141"/>
    </source>
</evidence>
<accession>B1ZHM8</accession>
<reference key="1">
    <citation type="submission" date="2008-04" db="EMBL/GenBank/DDBJ databases">
        <title>Complete sequence of chromosome of Methylobacterium populi BJ001.</title>
        <authorList>
            <consortium name="US DOE Joint Genome Institute"/>
            <person name="Copeland A."/>
            <person name="Lucas S."/>
            <person name="Lapidus A."/>
            <person name="Glavina del Rio T."/>
            <person name="Dalin E."/>
            <person name="Tice H."/>
            <person name="Bruce D."/>
            <person name="Goodwin L."/>
            <person name="Pitluck S."/>
            <person name="Chertkov O."/>
            <person name="Brettin T."/>
            <person name="Detter J.C."/>
            <person name="Han C."/>
            <person name="Kuske C.R."/>
            <person name="Schmutz J."/>
            <person name="Larimer F."/>
            <person name="Land M."/>
            <person name="Hauser L."/>
            <person name="Kyrpides N."/>
            <person name="Mikhailova N."/>
            <person name="Marx C."/>
            <person name="Richardson P."/>
        </authorList>
    </citation>
    <scope>NUCLEOTIDE SEQUENCE [LARGE SCALE GENOMIC DNA]</scope>
    <source>
        <strain>ATCC BAA-705 / NCIMB 13946 / BJ001</strain>
    </source>
</reference>
<gene>
    <name evidence="1" type="primary">efp</name>
    <name type="ordered locus">Mpop_3194</name>
</gene>
<feature type="chain" id="PRO_1000096174" description="Elongation factor P">
    <location>
        <begin position="1"/>
        <end position="188"/>
    </location>
</feature>
<name>EFP_METPB</name>
<sequence>MKVIASTLRKGNVVDKDGKLYVILTAENIHPGKGTPVTQLDMRRITDGVKISERYRTTEQVERAFVEDRDHTFLYQDGEGYHFMNPENYEQLAVPEDVVGDAAPYLQEGMVVTLSTHNGVPLAIELPQRVTLEIVETEPVTKGQTASSSYKPAILSNGVKTSVPPHITTGTRVVIMTADGAYVERAKD</sequence>
<protein>
    <recommendedName>
        <fullName evidence="1">Elongation factor P</fullName>
        <shortName evidence="1">EF-P</shortName>
    </recommendedName>
</protein>
<comment type="function">
    <text evidence="1">Involved in peptide bond synthesis. Stimulates efficient translation and peptide-bond synthesis on native or reconstituted 70S ribosomes in vitro. Probably functions indirectly by altering the affinity of the ribosome for aminoacyl-tRNA, thus increasing their reactivity as acceptors for peptidyl transferase.</text>
</comment>
<comment type="pathway">
    <text evidence="1">Protein biosynthesis; polypeptide chain elongation.</text>
</comment>
<comment type="subcellular location">
    <subcellularLocation>
        <location evidence="1">Cytoplasm</location>
    </subcellularLocation>
</comment>
<comment type="similarity">
    <text evidence="1">Belongs to the elongation factor P family.</text>
</comment>